<comment type="function">
    <text evidence="1 4 5 6">Stearoyl-CoA desaturase that utilizes O(2) and electrons from reduced cytochrome b5 to introduce the first double bond into saturated fatty acyl-CoA substrates (PubMed:15907797, PubMed:18765284). Catalyzes the insertion of a cis double bond at the delta-9 position into fatty acyl-CoA substrates including palmitoyl-CoA and stearoyl-CoA (PubMed:15907797, PubMed:18765284). Gives rise to a mixture of 16:1 and 18:1 unsaturated fatty acids (PubMed:15610069). Plays an important role in lipid biosynthesis. Plays an important role in regulating the expression of genes that are involved in lipogenesis and in regulating mitochondrial fatty acid oxidation (By similarity). Plays an important role in body energy homeostasis (By similarity). Contributes to the biosynthesis of membrane phospholipids, cholesterol esters and triglycerides (By similarity).</text>
</comment>
<comment type="catalytic activity">
    <reaction evidence="4 5 6">
        <text>octadecanoyl-CoA + 2 Fe(II)-[cytochrome b5] + O2 + 2 H(+) = (9Z)-octadecenoyl-CoA + 2 Fe(III)-[cytochrome b5] + 2 H2O</text>
        <dbReference type="Rhea" id="RHEA:19721"/>
        <dbReference type="Rhea" id="RHEA-COMP:10438"/>
        <dbReference type="Rhea" id="RHEA-COMP:10439"/>
        <dbReference type="ChEBI" id="CHEBI:15377"/>
        <dbReference type="ChEBI" id="CHEBI:15378"/>
        <dbReference type="ChEBI" id="CHEBI:15379"/>
        <dbReference type="ChEBI" id="CHEBI:29033"/>
        <dbReference type="ChEBI" id="CHEBI:29034"/>
        <dbReference type="ChEBI" id="CHEBI:57387"/>
        <dbReference type="ChEBI" id="CHEBI:57394"/>
        <dbReference type="EC" id="1.14.19.1"/>
    </reaction>
</comment>
<comment type="catalytic activity">
    <reaction evidence="4">
        <text>hexadecanoyl-CoA + 2 Fe(II)-[cytochrome b5] + O2 + 2 H(+) = (9Z)-hexadecenoyl-CoA + 2 Fe(III)-[cytochrome b5] + 2 H2O</text>
        <dbReference type="Rhea" id="RHEA:36931"/>
        <dbReference type="Rhea" id="RHEA-COMP:10438"/>
        <dbReference type="Rhea" id="RHEA-COMP:10439"/>
        <dbReference type="ChEBI" id="CHEBI:15377"/>
        <dbReference type="ChEBI" id="CHEBI:15378"/>
        <dbReference type="ChEBI" id="CHEBI:15379"/>
        <dbReference type="ChEBI" id="CHEBI:29033"/>
        <dbReference type="ChEBI" id="CHEBI:29034"/>
        <dbReference type="ChEBI" id="CHEBI:57379"/>
        <dbReference type="ChEBI" id="CHEBI:61540"/>
    </reaction>
</comment>
<comment type="cofactor">
    <cofactor evidence="6 14">
        <name>Fe(2+)</name>
        <dbReference type="ChEBI" id="CHEBI:29033"/>
    </cofactor>
    <text evidence="14">Expected to bind 2 Fe(2+) ions per subunit, instead of the Zn(2+) ions seen in the 3D-structure.</text>
</comment>
<comment type="subunit">
    <text evidence="4">May self-associate and form homodimers.</text>
</comment>
<comment type="interaction">
    <interactant intactId="EBI-2684237">
        <id>O00767</id>
    </interactant>
    <interactant intactId="EBI-13059134">
        <id>Q13520</id>
        <label>AQP6</label>
    </interactant>
    <organismsDiffer>false</organismsDiffer>
    <experiments>3</experiments>
</comment>
<comment type="interaction">
    <interactant intactId="EBI-2684237">
        <id>O00767</id>
    </interactant>
    <interactant intactId="EBI-2873235">
        <id>Q9UJ71</id>
        <label>CD207</label>
    </interactant>
    <organismsDiffer>false</organismsDiffer>
    <experiments>3</experiments>
</comment>
<comment type="interaction">
    <interactant intactId="EBI-2684237">
        <id>O00767</id>
    </interactant>
    <interactant intactId="EBI-3906571">
        <id>P20138</id>
        <label>CD33</label>
    </interactant>
    <organismsDiffer>false</organismsDiffer>
    <experiments>3</experiments>
</comment>
<comment type="interaction">
    <interactant intactId="EBI-2684237">
        <id>O00767</id>
    </interactant>
    <interactant intactId="EBI-2622997">
        <id>Q9HA82</id>
        <label>CERS4</label>
    </interactant>
    <organismsDiffer>false</organismsDiffer>
    <experiments>3</experiments>
</comment>
<comment type="interaction">
    <interactant intactId="EBI-2684237">
        <id>O00767</id>
    </interactant>
    <interactant intactId="EBI-12811991">
        <id>Q2HXU8-2</id>
        <label>CLEC12B</label>
    </interactant>
    <organismsDiffer>false</organismsDiffer>
    <experiments>3</experiments>
</comment>
<comment type="interaction">
    <interactant intactId="EBI-2684237">
        <id>O00767</id>
    </interactant>
    <interactant intactId="EBI-6942903">
        <id>Q96BA8</id>
        <label>CREB3L1</label>
    </interactant>
    <organismsDiffer>false</organismsDiffer>
    <experiments>3</experiments>
</comment>
<comment type="interaction">
    <interactant intactId="EBI-2684237">
        <id>O00767</id>
    </interactant>
    <interactant intactId="EBI-8646596">
        <id>P49447</id>
        <label>CYB561</label>
    </interactant>
    <organismsDiffer>false</organismsDiffer>
    <experiments>3</experiments>
</comment>
<comment type="interaction">
    <interactant intactId="EBI-2684237">
        <id>O00767</id>
    </interactant>
    <interactant intactId="EBI-2680384">
        <id>Q9BQA9</id>
        <label>CYBC1</label>
    </interactant>
    <organismsDiffer>false</organismsDiffer>
    <experiments>3</experiments>
</comment>
<comment type="interaction">
    <interactant intactId="EBI-2684237">
        <id>O00767</id>
    </interactant>
    <interactant intactId="EBI-781551">
        <id>Q9Y282</id>
        <label>ERGIC3</label>
    </interactant>
    <organismsDiffer>false</organismsDiffer>
    <experiments>3</experiments>
</comment>
<comment type="interaction">
    <interactant intactId="EBI-2684237">
        <id>O00767</id>
    </interactant>
    <interactant intactId="EBI-17565645">
        <id>P08034</id>
        <label>GJB1</label>
    </interactant>
    <organismsDiffer>false</organismsDiffer>
    <experiments>3</experiments>
</comment>
<comment type="interaction">
    <interactant intactId="EBI-2684237">
        <id>O00767</id>
    </interactant>
    <interactant intactId="EBI-13345167">
        <id>Q8TDT2</id>
        <label>GPR152</label>
    </interactant>
    <organismsDiffer>false</organismsDiffer>
    <experiments>3</experiments>
</comment>
<comment type="interaction">
    <interactant intactId="EBI-2684237">
        <id>O00767</id>
    </interactant>
    <interactant intactId="EBI-18076404">
        <id>O15529</id>
        <label>GPR42</label>
    </interactant>
    <organismsDiffer>false</organismsDiffer>
    <experiments>3</experiments>
</comment>
<comment type="interaction">
    <interactant intactId="EBI-2684237">
        <id>O00767</id>
    </interactant>
    <interactant intactId="EBI-11721746">
        <id>Q8TED1</id>
        <label>GPX8</label>
    </interactant>
    <organismsDiffer>false</organismsDiffer>
    <experiments>3</experiments>
</comment>
<comment type="interaction">
    <interactant intactId="EBI-2684237">
        <id>O00767</id>
    </interactant>
    <interactant intactId="EBI-18053395">
        <id>Q7Z5P4</id>
        <label>HSD17B13</label>
    </interactant>
    <organismsDiffer>false</organismsDiffer>
    <experiments>3</experiments>
</comment>
<comment type="interaction">
    <interactant intactId="EBI-2684237">
        <id>O00767</id>
    </interactant>
    <interactant intactId="EBI-10266796">
        <id>Q8N5M9</id>
        <label>JAGN1</label>
    </interactant>
    <organismsDiffer>false</organismsDiffer>
    <experiments>3</experiments>
</comment>
<comment type="interaction">
    <interactant intactId="EBI-2684237">
        <id>O00767</id>
    </interactant>
    <interactant intactId="EBI-12017638">
        <id>P48051</id>
        <label>KCNJ6</label>
    </interactant>
    <organismsDiffer>false</organismsDiffer>
    <experiments>3</experiments>
</comment>
<comment type="interaction">
    <interactant intactId="EBI-2684237">
        <id>O00767</id>
    </interactant>
    <interactant intactId="EBI-2341610">
        <id>Q9NX47</id>
        <label>MARCHF5</label>
    </interactant>
    <organismsDiffer>false</organismsDiffer>
    <experiments>3</experiments>
</comment>
<comment type="interaction">
    <interactant intactId="EBI-2684237">
        <id>O00767</id>
    </interactant>
    <interactant intactId="EBI-2689785">
        <id>Q8NI22</id>
        <label>MCFD2</label>
    </interactant>
    <organismsDiffer>false</organismsDiffer>
    <experiments>3</experiments>
</comment>
<comment type="interaction">
    <interactant intactId="EBI-2684237">
        <id>O00767</id>
    </interactant>
    <interactant intactId="EBI-373355">
        <id>Q5SR56</id>
        <label>MFSD14B</label>
    </interactant>
    <organismsDiffer>false</organismsDiffer>
    <experiments>3</experiments>
</comment>
<comment type="interaction">
    <interactant intactId="EBI-2684237">
        <id>O00767</id>
    </interactant>
    <interactant intactId="EBI-724754">
        <id>O14880</id>
        <label>MGST3</label>
    </interactant>
    <organismsDiffer>false</organismsDiffer>
    <experiments>3</experiments>
</comment>
<comment type="interaction">
    <interactant intactId="EBI-2684237">
        <id>O00767</id>
    </interactant>
    <interactant intactId="EBI-3923617">
        <id>Q9H2K0</id>
        <label>MTIF3</label>
    </interactant>
    <organismsDiffer>false</organismsDiffer>
    <experiments>3</experiments>
</comment>
<comment type="interaction">
    <interactant intactId="EBI-2684237">
        <id>O00767</id>
    </interactant>
    <interactant intactId="EBI-3919694">
        <id>P15151</id>
        <label>PVR</label>
    </interactant>
    <organismsDiffer>false</organismsDiffer>
    <experiments>3</experiments>
</comment>
<comment type="interaction">
    <interactant intactId="EBI-2684237">
        <id>O00767</id>
    </interactant>
    <interactant intactId="EBI-11337973">
        <id>Q9BRK0</id>
        <label>REEP2</label>
    </interactant>
    <organismsDiffer>false</organismsDiffer>
    <experiments>3</experiments>
</comment>
<comment type="interaction">
    <interactant intactId="EBI-2684237">
        <id>O00767</id>
    </interactant>
    <interactant intactId="EBI-10192441">
        <id>Q86VR2</id>
        <label>RETREG3</label>
    </interactant>
    <organismsDiffer>false</organismsDiffer>
    <experiments>3</experiments>
</comment>
<comment type="interaction">
    <interactant intactId="EBI-2684237">
        <id>O00767</id>
    </interactant>
    <interactant intactId="EBI-348482">
        <id>Q99942</id>
        <label>RNF5</label>
    </interactant>
    <organismsDiffer>false</organismsDiffer>
    <experiments>3</experiments>
</comment>
<comment type="interaction">
    <interactant intactId="EBI-2684237">
        <id>O00767</id>
    </interactant>
    <interactant intactId="EBI-17247926">
        <id>Q9NY72</id>
        <label>SCN3B</label>
    </interactant>
    <organismsDiffer>false</organismsDiffer>
    <experiments>3</experiments>
</comment>
<comment type="interaction">
    <interactant intactId="EBI-2684237">
        <id>O00767</id>
    </interactant>
    <interactant intactId="EBI-2855401">
        <id>Q9BY50</id>
        <label>SEC11C</label>
    </interactant>
    <organismsDiffer>false</organismsDiffer>
    <experiments>3</experiments>
</comment>
<comment type="interaction">
    <interactant intactId="EBI-2684237">
        <id>O00767</id>
    </interactant>
    <interactant intactId="EBI-18159983">
        <id>Q3KNW5</id>
        <label>SLC10A6</label>
    </interactant>
    <organismsDiffer>false</organismsDiffer>
    <experiments>3</experiments>
</comment>
<comment type="interaction">
    <interactant intactId="EBI-2684237">
        <id>O00767</id>
    </interactant>
    <interactant intactId="EBI-5235586">
        <id>Q8TBB6</id>
        <label>SLC7A14</label>
    </interactant>
    <organismsDiffer>false</organismsDiffer>
    <experiments>3</experiments>
</comment>
<comment type="interaction">
    <interactant intactId="EBI-2684237">
        <id>O00767</id>
    </interactant>
    <interactant intactId="EBI-10819434">
        <id>Q9NPE6</id>
        <label>SPAG4</label>
    </interactant>
    <organismsDiffer>false</organismsDiffer>
    <experiments>3</experiments>
</comment>
<comment type="interaction">
    <interactant intactId="EBI-2684237">
        <id>O00767</id>
    </interactant>
    <interactant intactId="EBI-1211440">
        <id>P27105</id>
        <label>STOM</label>
    </interactant>
    <organismsDiffer>false</organismsDiffer>
    <experiments>3</experiments>
</comment>
<comment type="interaction">
    <interactant intactId="EBI-2684237">
        <id>O00767</id>
    </interactant>
    <interactant intactId="EBI-6268651">
        <id>Q9NPL8</id>
        <label>TIMMDC1</label>
    </interactant>
    <organismsDiffer>false</organismsDiffer>
    <experiments>3</experiments>
</comment>
<comment type="interaction">
    <interactant intactId="EBI-2684237">
        <id>O00767</id>
    </interactant>
    <interactant intactId="EBI-12947623">
        <id>Q96MV1</id>
        <label>TLCD4</label>
    </interactant>
    <organismsDiffer>false</organismsDiffer>
    <experiments>3</experiments>
</comment>
<comment type="interaction">
    <interactant intactId="EBI-2684237">
        <id>O00767</id>
    </interactant>
    <interactant intactId="EBI-9527107">
        <id>Q3MIR4</id>
        <label>TMEM30B</label>
    </interactant>
    <organismsDiffer>false</organismsDiffer>
    <experiments>3</experiments>
</comment>
<comment type="interaction">
    <interactant intactId="EBI-2684237">
        <id>O00767</id>
    </interactant>
    <interactant intactId="EBI-12345267">
        <id>O15393-2</id>
        <label>TMPRSS2</label>
    </interactant>
    <organismsDiffer>false</organismsDiffer>
    <experiments>4</experiments>
</comment>
<comment type="interaction">
    <interactant intactId="EBI-2684237">
        <id>O00767</id>
    </interactant>
    <interactant intactId="EBI-6447886">
        <id>Q9Y320</id>
        <label>TMX2</label>
    </interactant>
    <organismsDiffer>false</organismsDiffer>
    <experiments>3</experiments>
</comment>
<comment type="interaction">
    <interactant intactId="EBI-2684237">
        <id>O00767</id>
    </interactant>
    <interactant intactId="EBI-1055364">
        <id>Q3ZAQ7</id>
        <label>VMA21</label>
    </interactant>
    <organismsDiffer>false</organismsDiffer>
    <experiments>3</experiments>
</comment>
<comment type="interaction">
    <interactant intactId="EBI-2684237">
        <id>O00767</id>
    </interactant>
    <interactant intactId="EBI-20625235">
        <id>A0A142I5B9</id>
    </interactant>
    <organismsDiffer>true</organismsDiffer>
    <experiments>3</experiments>
</comment>
<comment type="subcellular location">
    <subcellularLocation>
        <location evidence="5">Endoplasmic reticulum membrane</location>
        <topology evidence="6 13">Multi-pass membrane protein</topology>
    </subcellularLocation>
</comment>
<comment type="tissue specificity">
    <text evidence="5">Detected in fetal liver, lung and brain. Highly expressed in adult adipose tissue, and at lower levels in adult brain and lung.</text>
</comment>
<comment type="domain">
    <text evidence="7">The histidine box domains are involved in binding the catalytic metal ions.</text>
</comment>
<comment type="similarity">
    <text evidence="13">Belongs to the fatty acid desaturase type 1 family.</text>
</comment>
<sequence length="359" mass="41523">MPAHLLQDDISSSYTTTTTITAPPSRVLQNGGDKLETMPLYLEDDIRPDIKDDIYDPTYKDKEGPSPKVEYVWRNIILMSLLHLGALYGITLIPTCKFYTWLWGVFYYFVSALGITAGAHRLWSHRSYKARLPLRLFLIIANTMAFQNDVYEWARDHRAHHKFSETHADPHNSRRGFFFSHVGWLLVRKHPAVKEKGSTLDLSDLEAEKLVMFQRRYYKPGLLMMCFILPTLVPWYFWGETFQNSVFVATFLRYAVVLNATWLVNSAAHLFGYRPYDKNISPRENILVSLGAVGEGFHNYHHSFPYDYSASEYRWHINFTTFFIDCMAALGLAYDRKKVSKAAILARIKRTGDGNYKSG</sequence>
<reference key="1">
    <citation type="submission" date="1997-06" db="EMBL/GenBank/DDBJ databases">
        <title>Characterization and expression of a stearoyl CoA desaturase from human liver.</title>
        <authorList>
            <person name="Al-Jeryan L."/>
            <person name="McCord A."/>
            <person name="Pierotti A.R."/>
            <person name="Craft J.A."/>
        </authorList>
    </citation>
    <scope>NUCLEOTIDE SEQUENCE [MRNA]</scope>
    <source>
        <tissue>Liver</tissue>
    </source>
</reference>
<reference key="2">
    <citation type="journal article" date="1999" name="Biochem. J.">
        <title>Human stearoyl-CoA desaturase: alternative transcripts generated from a single gene by usage of tandem polyadenylation sites.</title>
        <authorList>
            <person name="Zhang L."/>
            <person name="Ge L."/>
            <person name="Parimoo S."/>
            <person name="Stenn K."/>
            <person name="Prouty S.M."/>
        </authorList>
    </citation>
    <scope>NUCLEOTIDE SEQUENCE [MRNA]</scope>
    <scope>VARIANT LEU-224</scope>
    <source>
        <tissue>Brain</tissue>
        <tissue>Liver</tissue>
        <tissue>Skin</tissue>
    </source>
</reference>
<reference key="3">
    <citation type="submission" date="1999-09" db="EMBL/GenBank/DDBJ databases">
        <title>Cloning, sequencing and expression of human stearoyl-CoA desaturase.</title>
        <authorList>
            <person name="Hoshino T."/>
            <person name="Ohtsu K."/>
        </authorList>
    </citation>
    <scope>NUCLEOTIDE SEQUENCE [MRNA]</scope>
    <scope>VARIANT LEU-224</scope>
</reference>
<reference key="4">
    <citation type="journal article" date="2004" name="Nat. Genet.">
        <title>Complete sequencing and characterization of 21,243 full-length human cDNAs.</title>
        <authorList>
            <person name="Ota T."/>
            <person name="Suzuki Y."/>
            <person name="Nishikawa T."/>
            <person name="Otsuki T."/>
            <person name="Sugiyama T."/>
            <person name="Irie R."/>
            <person name="Wakamatsu A."/>
            <person name="Hayashi K."/>
            <person name="Sato H."/>
            <person name="Nagai K."/>
            <person name="Kimura K."/>
            <person name="Makita H."/>
            <person name="Sekine M."/>
            <person name="Obayashi M."/>
            <person name="Nishi T."/>
            <person name="Shibahara T."/>
            <person name="Tanaka T."/>
            <person name="Ishii S."/>
            <person name="Yamamoto J."/>
            <person name="Saito K."/>
            <person name="Kawai Y."/>
            <person name="Isono Y."/>
            <person name="Nakamura Y."/>
            <person name="Nagahari K."/>
            <person name="Murakami K."/>
            <person name="Yasuda T."/>
            <person name="Iwayanagi T."/>
            <person name="Wagatsuma M."/>
            <person name="Shiratori A."/>
            <person name="Sudo H."/>
            <person name="Hosoiri T."/>
            <person name="Kaku Y."/>
            <person name="Kodaira H."/>
            <person name="Kondo H."/>
            <person name="Sugawara M."/>
            <person name="Takahashi M."/>
            <person name="Kanda K."/>
            <person name="Yokoi T."/>
            <person name="Furuya T."/>
            <person name="Kikkawa E."/>
            <person name="Omura Y."/>
            <person name="Abe K."/>
            <person name="Kamihara K."/>
            <person name="Katsuta N."/>
            <person name="Sato K."/>
            <person name="Tanikawa M."/>
            <person name="Yamazaki M."/>
            <person name="Ninomiya K."/>
            <person name="Ishibashi T."/>
            <person name="Yamashita H."/>
            <person name="Murakawa K."/>
            <person name="Fujimori K."/>
            <person name="Tanai H."/>
            <person name="Kimata M."/>
            <person name="Watanabe M."/>
            <person name="Hiraoka S."/>
            <person name="Chiba Y."/>
            <person name="Ishida S."/>
            <person name="Ono Y."/>
            <person name="Takiguchi S."/>
            <person name="Watanabe S."/>
            <person name="Yosida M."/>
            <person name="Hotuta T."/>
            <person name="Kusano J."/>
            <person name="Kanehori K."/>
            <person name="Takahashi-Fujii A."/>
            <person name="Hara H."/>
            <person name="Tanase T.-O."/>
            <person name="Nomura Y."/>
            <person name="Togiya S."/>
            <person name="Komai F."/>
            <person name="Hara R."/>
            <person name="Takeuchi K."/>
            <person name="Arita M."/>
            <person name="Imose N."/>
            <person name="Musashino K."/>
            <person name="Yuuki H."/>
            <person name="Oshima A."/>
            <person name="Sasaki N."/>
            <person name="Aotsuka S."/>
            <person name="Yoshikawa Y."/>
            <person name="Matsunawa H."/>
            <person name="Ichihara T."/>
            <person name="Shiohata N."/>
            <person name="Sano S."/>
            <person name="Moriya S."/>
            <person name="Momiyama H."/>
            <person name="Satoh N."/>
            <person name="Takami S."/>
            <person name="Terashima Y."/>
            <person name="Suzuki O."/>
            <person name="Nakagawa S."/>
            <person name="Senoh A."/>
            <person name="Mizoguchi H."/>
            <person name="Goto Y."/>
            <person name="Shimizu F."/>
            <person name="Wakebe H."/>
            <person name="Hishigaki H."/>
            <person name="Watanabe T."/>
            <person name="Sugiyama A."/>
            <person name="Takemoto M."/>
            <person name="Kawakami B."/>
            <person name="Yamazaki M."/>
            <person name="Watanabe K."/>
            <person name="Kumagai A."/>
            <person name="Itakura S."/>
            <person name="Fukuzumi Y."/>
            <person name="Fujimori Y."/>
            <person name="Komiyama M."/>
            <person name="Tashiro H."/>
            <person name="Tanigami A."/>
            <person name="Fujiwara T."/>
            <person name="Ono T."/>
            <person name="Yamada K."/>
            <person name="Fujii Y."/>
            <person name="Ozaki K."/>
            <person name="Hirao M."/>
            <person name="Ohmori Y."/>
            <person name="Kawabata A."/>
            <person name="Hikiji T."/>
            <person name="Kobatake N."/>
            <person name="Inagaki H."/>
            <person name="Ikema Y."/>
            <person name="Okamoto S."/>
            <person name="Okitani R."/>
            <person name="Kawakami T."/>
            <person name="Noguchi S."/>
            <person name="Itoh T."/>
            <person name="Shigeta K."/>
            <person name="Senba T."/>
            <person name="Matsumura K."/>
            <person name="Nakajima Y."/>
            <person name="Mizuno T."/>
            <person name="Morinaga M."/>
            <person name="Sasaki M."/>
            <person name="Togashi T."/>
            <person name="Oyama M."/>
            <person name="Hata H."/>
            <person name="Watanabe M."/>
            <person name="Komatsu T."/>
            <person name="Mizushima-Sugano J."/>
            <person name="Satoh T."/>
            <person name="Shirai Y."/>
            <person name="Takahashi Y."/>
            <person name="Nakagawa K."/>
            <person name="Okumura K."/>
            <person name="Nagase T."/>
            <person name="Nomura N."/>
            <person name="Kikuchi H."/>
            <person name="Masuho Y."/>
            <person name="Yamashita R."/>
            <person name="Nakai K."/>
            <person name="Yada T."/>
            <person name="Nakamura Y."/>
            <person name="Ohara O."/>
            <person name="Isogai T."/>
            <person name="Sugano S."/>
        </authorList>
    </citation>
    <scope>NUCLEOTIDE SEQUENCE [LARGE SCALE MRNA]</scope>
    <source>
        <tissue>Cerebellum</tissue>
    </source>
</reference>
<reference key="5">
    <citation type="submission" date="2005-04" db="EMBL/GenBank/DDBJ databases">
        <authorList>
            <person name="Suzuki Y."/>
            <person name="Sugano S."/>
            <person name="Totoki Y."/>
            <person name="Toyoda A."/>
            <person name="Takeda T."/>
            <person name="Sakaki Y."/>
            <person name="Tanaka A."/>
            <person name="Yokoyama S."/>
        </authorList>
    </citation>
    <scope>NUCLEOTIDE SEQUENCE [LARGE SCALE MRNA]</scope>
    <source>
        <tissue>Liver</tissue>
    </source>
</reference>
<reference key="6">
    <citation type="journal article" date="2004" name="Nature">
        <title>The DNA sequence and comparative analysis of human chromosome 10.</title>
        <authorList>
            <person name="Deloukas P."/>
            <person name="Earthrowl M.E."/>
            <person name="Grafham D.V."/>
            <person name="Rubenfield M."/>
            <person name="French L."/>
            <person name="Steward C.A."/>
            <person name="Sims S.K."/>
            <person name="Jones M.C."/>
            <person name="Searle S."/>
            <person name="Scott C."/>
            <person name="Howe K."/>
            <person name="Hunt S.E."/>
            <person name="Andrews T.D."/>
            <person name="Gilbert J.G.R."/>
            <person name="Swarbreck D."/>
            <person name="Ashurst J.L."/>
            <person name="Taylor A."/>
            <person name="Battles J."/>
            <person name="Bird C.P."/>
            <person name="Ainscough R."/>
            <person name="Almeida J.P."/>
            <person name="Ashwell R.I.S."/>
            <person name="Ambrose K.D."/>
            <person name="Babbage A.K."/>
            <person name="Bagguley C.L."/>
            <person name="Bailey J."/>
            <person name="Banerjee R."/>
            <person name="Bates K."/>
            <person name="Beasley H."/>
            <person name="Bray-Allen S."/>
            <person name="Brown A.J."/>
            <person name="Brown J.Y."/>
            <person name="Burford D.C."/>
            <person name="Burrill W."/>
            <person name="Burton J."/>
            <person name="Cahill P."/>
            <person name="Camire D."/>
            <person name="Carter N.P."/>
            <person name="Chapman J.C."/>
            <person name="Clark S.Y."/>
            <person name="Clarke G."/>
            <person name="Clee C.M."/>
            <person name="Clegg S."/>
            <person name="Corby N."/>
            <person name="Coulson A."/>
            <person name="Dhami P."/>
            <person name="Dutta I."/>
            <person name="Dunn M."/>
            <person name="Faulkner L."/>
            <person name="Frankish A."/>
            <person name="Frankland J.A."/>
            <person name="Garner P."/>
            <person name="Garnett J."/>
            <person name="Gribble S."/>
            <person name="Griffiths C."/>
            <person name="Grocock R."/>
            <person name="Gustafson E."/>
            <person name="Hammond S."/>
            <person name="Harley J.L."/>
            <person name="Hart E."/>
            <person name="Heath P.D."/>
            <person name="Ho T.P."/>
            <person name="Hopkins B."/>
            <person name="Horne J."/>
            <person name="Howden P.J."/>
            <person name="Huckle E."/>
            <person name="Hynds C."/>
            <person name="Johnson C."/>
            <person name="Johnson D."/>
            <person name="Kana A."/>
            <person name="Kay M."/>
            <person name="Kimberley A.M."/>
            <person name="Kershaw J.K."/>
            <person name="Kokkinaki M."/>
            <person name="Laird G.K."/>
            <person name="Lawlor S."/>
            <person name="Lee H.M."/>
            <person name="Leongamornlert D.A."/>
            <person name="Laird G."/>
            <person name="Lloyd C."/>
            <person name="Lloyd D.M."/>
            <person name="Loveland J."/>
            <person name="Lovell J."/>
            <person name="McLaren S."/>
            <person name="McLay K.E."/>
            <person name="McMurray A."/>
            <person name="Mashreghi-Mohammadi M."/>
            <person name="Matthews L."/>
            <person name="Milne S."/>
            <person name="Nickerson T."/>
            <person name="Nguyen M."/>
            <person name="Overton-Larty E."/>
            <person name="Palmer S.A."/>
            <person name="Pearce A.V."/>
            <person name="Peck A.I."/>
            <person name="Pelan S."/>
            <person name="Phillimore B."/>
            <person name="Porter K."/>
            <person name="Rice C.M."/>
            <person name="Rogosin A."/>
            <person name="Ross M.T."/>
            <person name="Sarafidou T."/>
            <person name="Sehra H.K."/>
            <person name="Shownkeen R."/>
            <person name="Skuce C.D."/>
            <person name="Smith M."/>
            <person name="Standring L."/>
            <person name="Sycamore N."/>
            <person name="Tester J."/>
            <person name="Thorpe A."/>
            <person name="Torcasso W."/>
            <person name="Tracey A."/>
            <person name="Tromans A."/>
            <person name="Tsolas J."/>
            <person name="Wall M."/>
            <person name="Walsh J."/>
            <person name="Wang H."/>
            <person name="Weinstock K."/>
            <person name="West A.P."/>
            <person name="Willey D.L."/>
            <person name="Whitehead S.L."/>
            <person name="Wilming L."/>
            <person name="Wray P.W."/>
            <person name="Young L."/>
            <person name="Chen Y."/>
            <person name="Lovering R.C."/>
            <person name="Moschonas N.K."/>
            <person name="Siebert R."/>
            <person name="Fechtel K."/>
            <person name="Bentley D."/>
            <person name="Durbin R.M."/>
            <person name="Hubbard T."/>
            <person name="Doucette-Stamm L."/>
            <person name="Beck S."/>
            <person name="Smith D.R."/>
            <person name="Rogers J."/>
        </authorList>
    </citation>
    <scope>NUCLEOTIDE SEQUENCE [LARGE SCALE GENOMIC DNA]</scope>
</reference>
<reference key="7">
    <citation type="submission" date="2005-09" db="EMBL/GenBank/DDBJ databases">
        <authorList>
            <person name="Mural R.J."/>
            <person name="Istrail S."/>
            <person name="Sutton G.G."/>
            <person name="Florea L."/>
            <person name="Halpern A.L."/>
            <person name="Mobarry C.M."/>
            <person name="Lippert R."/>
            <person name="Walenz B."/>
            <person name="Shatkay H."/>
            <person name="Dew I."/>
            <person name="Miller J.R."/>
            <person name="Flanigan M.J."/>
            <person name="Edwards N.J."/>
            <person name="Bolanos R."/>
            <person name="Fasulo D."/>
            <person name="Halldorsson B.V."/>
            <person name="Hannenhalli S."/>
            <person name="Turner R."/>
            <person name="Yooseph S."/>
            <person name="Lu F."/>
            <person name="Nusskern D.R."/>
            <person name="Shue B.C."/>
            <person name="Zheng X.H."/>
            <person name="Zhong F."/>
            <person name="Delcher A.L."/>
            <person name="Huson D.H."/>
            <person name="Kravitz S.A."/>
            <person name="Mouchard L."/>
            <person name="Reinert K."/>
            <person name="Remington K.A."/>
            <person name="Clark A.G."/>
            <person name="Waterman M.S."/>
            <person name="Eichler E.E."/>
            <person name="Adams M.D."/>
            <person name="Hunkapiller M.W."/>
            <person name="Myers E.W."/>
            <person name="Venter J.C."/>
        </authorList>
    </citation>
    <scope>NUCLEOTIDE SEQUENCE [LARGE SCALE GENOMIC DNA]</scope>
    <scope>VARIANT LEU-224</scope>
</reference>
<reference key="8">
    <citation type="journal article" date="2004" name="Genome Res.">
        <title>The status, quality, and expansion of the NIH full-length cDNA project: the Mammalian Gene Collection (MGC).</title>
        <authorList>
            <consortium name="The MGC Project Team"/>
        </authorList>
    </citation>
    <scope>NUCLEOTIDE SEQUENCE [LARGE SCALE MRNA]</scope>
    <scope>VARIANT LEU-224</scope>
    <source>
        <tissue>Mammary gland</tissue>
        <tissue>Placenta</tissue>
    </source>
</reference>
<reference key="9">
    <citation type="journal article" date="2001" name="Biochem. J.">
        <title>Isolation and characterization of the human stearoyl-CoA desaturase gene promoter: requirement of a conserved CCAAT cis-element.</title>
        <authorList>
            <person name="Zhang L."/>
            <person name="Ge L."/>
            <person name="Tran T."/>
            <person name="Stenn K."/>
            <person name="Prouty S.M."/>
        </authorList>
    </citation>
    <scope>NUCLEOTIDE SEQUENCE [GENOMIC DNA] OF 1-9</scope>
</reference>
<reference key="10">
    <citation type="journal article" date="2009" name="Proc. Natl. Acad. Sci. U.S.A.">
        <title>Global profiling of protease cleavage sites by chemoselective labeling of protein N-termini.</title>
        <authorList>
            <person name="Xu G."/>
            <person name="Shin S.B."/>
            <person name="Jaffrey S.R."/>
        </authorList>
    </citation>
    <scope>PROTEIN SEQUENCE [LARGE SCALE ANALYSIS] OF 2-27</scope>
    <source>
        <tissue>Leukemic T-cell</tissue>
    </source>
</reference>
<reference key="11">
    <citation type="journal article" date="1994" name="Int. J. Cancer">
        <title>Partial characterization of a cDNA for human stearoyl-CoA desaturase and changes in its mRNA expression in some normal and malignant tissues.</title>
        <authorList>
            <person name="Li J."/>
            <person name="Ding S.-F."/>
            <person name="Habib N.A."/>
            <person name="Fermor B.F."/>
            <person name="Wood C.B."/>
            <person name="Gilmour R.S."/>
        </authorList>
    </citation>
    <scope>NUCLEOTIDE SEQUENCE [MRNA] OF 3-239</scope>
    <source>
        <tissue>Adipose tissue</tissue>
    </source>
</reference>
<reference key="12">
    <citation type="journal article" date="2005" name="Biochem. Biophys. Res. Commun.">
        <title>Characterization of HSCD5, a novel human stearoyl-CoA desaturase unique to primates.</title>
        <authorList>
            <person name="Wang J."/>
            <person name="Yu L."/>
            <person name="Schmidt R.E."/>
            <person name="Su C."/>
            <person name="Huang X."/>
            <person name="Gould K."/>
            <person name="Cao G."/>
        </authorList>
    </citation>
    <scope>FUNCTION</scope>
    <scope>CATALYTIC ACTIVITY</scope>
    <scope>SUBCELLULAR LOCATION</scope>
    <scope>TISSUE SPECIFICITY</scope>
</reference>
<reference key="13">
    <citation type="journal article" date="2005" name="Biochem. J.">
        <title>Characterization of human SCD2, an oligomeric desaturase with improved stability and enzyme activity by cross-linking in intact cells.</title>
        <authorList>
            <person name="Zhang S."/>
            <person name="Yang Y."/>
            <person name="Shi Y."/>
        </authorList>
    </citation>
    <scope>FUNCTION</scope>
    <scope>CATALYTIC ACTIVITY</scope>
    <scope>SUBUNIT</scope>
</reference>
<reference key="14">
    <citation type="journal article" date="2008" name="Mol. Cell">
        <title>Kinase-selective enrichment enables quantitative phosphoproteomics of the kinome across the cell cycle.</title>
        <authorList>
            <person name="Daub H."/>
            <person name="Olsen J.V."/>
            <person name="Bairlein M."/>
            <person name="Gnad F."/>
            <person name="Oppermann F.S."/>
            <person name="Korner R."/>
            <person name="Greff Z."/>
            <person name="Keri G."/>
            <person name="Stemmann O."/>
            <person name="Mann M."/>
        </authorList>
    </citation>
    <scope>PHOSPHORYLATION [LARGE SCALE ANALYSIS] AT SER-203</scope>
    <scope>IDENTIFICATION BY MASS SPECTROMETRY [LARGE SCALE ANALYSIS]</scope>
    <source>
        <tissue>Cervix carcinoma</tissue>
    </source>
</reference>
<reference key="15">
    <citation type="journal article" date="2008" name="Proc. Natl. Acad. Sci. U.S.A.">
        <title>A quantitative atlas of mitotic phosphorylation.</title>
        <authorList>
            <person name="Dephoure N."/>
            <person name="Zhou C."/>
            <person name="Villen J."/>
            <person name="Beausoleil S.A."/>
            <person name="Bakalarski C.E."/>
            <person name="Elledge S.J."/>
            <person name="Gygi S.P."/>
        </authorList>
    </citation>
    <scope>IDENTIFICATION BY MASS SPECTROMETRY [LARGE SCALE ANALYSIS]</scope>
    <source>
        <tissue>Cervix carcinoma</tissue>
    </source>
</reference>
<reference key="16">
    <citation type="journal article" date="2008" name="Protein Expr. Purif.">
        <title>Wheat germ cell-free translation, purification, and assembly of a functional human stearoyl-CoA desaturase complex.</title>
        <authorList>
            <person name="Goren M.A."/>
            <person name="Fox B.G."/>
        </authorList>
    </citation>
    <scope>FUNCTION</scope>
    <scope>CATALYTIC ACTIVITY</scope>
    <scope>COFACTOR</scope>
    <scope>SUBCELLULAR LOCATION</scope>
</reference>
<reference key="17">
    <citation type="journal article" date="2011" name="BMC Syst. Biol.">
        <title>Initial characterization of the human central proteome.</title>
        <authorList>
            <person name="Burkard T.R."/>
            <person name="Planyavsky M."/>
            <person name="Kaupe I."/>
            <person name="Breitwieser F.P."/>
            <person name="Buerckstuemmer T."/>
            <person name="Bennett K.L."/>
            <person name="Superti-Furga G."/>
            <person name="Colinge J."/>
        </authorList>
    </citation>
    <scope>IDENTIFICATION BY MASS SPECTROMETRY [LARGE SCALE ANALYSIS]</scope>
</reference>
<reference key="18">
    <citation type="journal article" date="2011" name="Sci. Signal.">
        <title>System-wide temporal characterization of the proteome and phosphoproteome of human embryonic stem cell differentiation.</title>
        <authorList>
            <person name="Rigbolt K.T."/>
            <person name="Prokhorova T.A."/>
            <person name="Akimov V."/>
            <person name="Henningsen J."/>
            <person name="Johansen P.T."/>
            <person name="Kratchmarova I."/>
            <person name="Kassem M."/>
            <person name="Mann M."/>
            <person name="Olsen J.V."/>
            <person name="Blagoev B."/>
        </authorList>
    </citation>
    <scope>IDENTIFICATION BY MASS SPECTROMETRY [LARGE SCALE ANALYSIS]</scope>
</reference>
<reference key="19">
    <citation type="journal article" date="2013" name="J. Proteome Res.">
        <title>Toward a comprehensive characterization of a human cancer cell phosphoproteome.</title>
        <authorList>
            <person name="Zhou H."/>
            <person name="Di Palma S."/>
            <person name="Preisinger C."/>
            <person name="Peng M."/>
            <person name="Polat A.N."/>
            <person name="Heck A.J."/>
            <person name="Mohammed S."/>
        </authorList>
    </citation>
    <scope>PHOSPHORYLATION [LARGE SCALE ANALYSIS] AT SER-198 AND SER-203</scope>
    <scope>IDENTIFICATION BY MASS SPECTROMETRY [LARGE SCALE ANALYSIS]</scope>
    <source>
        <tissue>Cervix carcinoma</tissue>
        <tissue>Erythroleukemia</tissue>
    </source>
</reference>
<reference key="20">
    <citation type="journal article" date="2015" name="Nat. Struct. Mol. Biol.">
        <title>Crystal structure of human stearoyl-coenzyme A desaturase in complex with substrate.</title>
        <authorList>
            <person name="Wang H."/>
            <person name="Klein M.G."/>
            <person name="Zou H."/>
            <person name="Lane W."/>
            <person name="Snell G."/>
            <person name="Levin I."/>
            <person name="Li K."/>
            <person name="Sang B.C."/>
        </authorList>
    </citation>
    <scope>X-RAY CRYSTALLOGRAPHY (3.25 ANGSTROMS) OF 45-359 IN COMPLEX WITH STEAROYL-COENZYME A AND ZINC IONS</scope>
    <scope>TOPOLOGY</scope>
</reference>
<feature type="chain" id="PRO_0000185395" description="Stearoyl-CoA desaturase">
    <location>
        <begin position="1"/>
        <end position="359"/>
    </location>
</feature>
<feature type="topological domain" description="Cytoplasmic" evidence="14">
    <location>
        <begin position="1"/>
        <end position="72"/>
    </location>
</feature>
<feature type="transmembrane region" description="Helical" evidence="7">
    <location>
        <begin position="73"/>
        <end position="93"/>
    </location>
</feature>
<feature type="topological domain" description="Lumenal" evidence="14">
    <location>
        <begin position="94"/>
        <end position="97"/>
    </location>
</feature>
<feature type="transmembrane region" description="Helical" evidence="7">
    <location>
        <begin position="98"/>
        <end position="118"/>
    </location>
</feature>
<feature type="topological domain" description="Cytoplasmic" evidence="14">
    <location>
        <begin position="119"/>
        <end position="217"/>
    </location>
</feature>
<feature type="transmembrane region" description="Helical" evidence="7">
    <location>
        <begin position="218"/>
        <end position="237"/>
    </location>
</feature>
<feature type="topological domain" description="Lumenal" evidence="14">
    <location>
        <begin position="238"/>
        <end position="241"/>
    </location>
</feature>
<feature type="transmembrane region" description="Helical" evidence="7">
    <location>
        <begin position="242"/>
        <end position="263"/>
    </location>
</feature>
<feature type="topological domain" description="Cytoplasmic" evidence="14">
    <location>
        <begin position="264"/>
        <end position="359"/>
    </location>
</feature>
<feature type="short sequence motif" description="Histidine box-1" evidence="13">
    <location>
        <begin position="120"/>
        <end position="125"/>
    </location>
</feature>
<feature type="short sequence motif" description="Histidine box-2" evidence="13">
    <location>
        <begin position="157"/>
        <end position="161"/>
    </location>
</feature>
<feature type="short sequence motif" description="Histidine box-3" evidence="13">
    <location>
        <begin position="298"/>
        <end position="302"/>
    </location>
</feature>
<feature type="binding site" evidence="7">
    <location>
        <position position="75"/>
    </location>
    <ligand>
        <name>substrate</name>
    </ligand>
</feature>
<feature type="binding site" evidence="14">
    <location>
        <position position="120"/>
    </location>
    <ligand>
        <name>Fe cation</name>
        <dbReference type="ChEBI" id="CHEBI:24875"/>
        <label>1</label>
    </ligand>
</feature>
<feature type="binding site" evidence="14">
    <location>
        <position position="125"/>
    </location>
    <ligand>
        <name>Fe cation</name>
        <dbReference type="ChEBI" id="CHEBI:24875"/>
        <label>1</label>
    </ligand>
</feature>
<feature type="binding site" evidence="7">
    <location>
        <position position="148"/>
    </location>
    <ligand>
        <name>substrate</name>
    </ligand>
</feature>
<feature type="binding site" evidence="7">
    <location>
        <position position="155"/>
    </location>
    <ligand>
        <name>substrate</name>
    </ligand>
</feature>
<feature type="binding site" evidence="7">
    <location>
        <position position="156"/>
    </location>
    <ligand>
        <name>substrate</name>
    </ligand>
</feature>
<feature type="binding site" evidence="14">
    <location>
        <position position="157"/>
    </location>
    <ligand>
        <name>Fe cation</name>
        <dbReference type="ChEBI" id="CHEBI:24875"/>
        <label>1</label>
    </ligand>
</feature>
<feature type="binding site" evidence="14">
    <location>
        <position position="160"/>
    </location>
    <ligand>
        <name>Fe cation</name>
        <dbReference type="ChEBI" id="CHEBI:24875"/>
        <label>2</label>
    </ligand>
</feature>
<feature type="binding site" evidence="14">
    <location>
        <position position="161"/>
    </location>
    <ligand>
        <name>Fe cation</name>
        <dbReference type="ChEBI" id="CHEBI:24875"/>
        <label>1</label>
    </ligand>
</feature>
<feature type="binding site" evidence="7">
    <location>
        <position position="188"/>
    </location>
    <ligand>
        <name>substrate</name>
    </ligand>
</feature>
<feature type="binding site" evidence="7">
    <location>
        <position position="189"/>
    </location>
    <ligand>
        <name>substrate</name>
    </ligand>
</feature>
<feature type="binding site" evidence="7">
    <location>
        <position position="262"/>
    </location>
    <ligand>
        <name>substrate</name>
    </ligand>
</feature>
<feature type="binding site" evidence="14">
    <location>
        <position position="269"/>
    </location>
    <ligand>
        <name>Fe cation</name>
        <dbReference type="ChEBI" id="CHEBI:24875"/>
        <label>2</label>
    </ligand>
</feature>
<feature type="binding site" evidence="14">
    <location>
        <position position="298"/>
    </location>
    <ligand>
        <name>Fe cation</name>
        <dbReference type="ChEBI" id="CHEBI:24875"/>
        <label>2</label>
    </ligand>
</feature>
<feature type="binding site" evidence="14">
    <location>
        <position position="301"/>
    </location>
    <ligand>
        <name>Fe cation</name>
        <dbReference type="ChEBI" id="CHEBI:24875"/>
        <label>1</label>
    </ligand>
</feature>
<feature type="binding site" evidence="14">
    <location>
        <position position="302"/>
    </location>
    <ligand>
        <name>Fe cation</name>
        <dbReference type="ChEBI" id="CHEBI:24875"/>
        <label>2</label>
    </ligand>
</feature>
<feature type="modified residue" description="Phosphoserine" evidence="17">
    <location>
        <position position="198"/>
    </location>
</feature>
<feature type="modified residue" description="Phosphoserine" evidence="16 17">
    <location>
        <position position="203"/>
    </location>
</feature>
<feature type="sequence variant" id="VAR_025994" description="In dbSNP:rs2234970." evidence="2 3 8 9">
    <original>M</original>
    <variation>L</variation>
    <location>
        <position position="224"/>
    </location>
</feature>
<feature type="sequence conflict" description="In Ref. 11; AAB30631." evidence="13" ref="11">
    <original>L</original>
    <variation>M</variation>
    <location>
        <position position="5"/>
    </location>
</feature>
<feature type="sequence conflict" description="In Ref. 11; AAB30631." evidence="13" ref="11">
    <original>D</original>
    <variation>E</variation>
    <location>
        <position position="8"/>
    </location>
</feature>
<feature type="sequence conflict" description="In Ref. 1; CAA73998 and 11; AAB30631." evidence="13" ref="1 11">
    <original>SR</original>
    <variation>PG</variation>
    <location>
        <begin position="25"/>
        <end position="26"/>
    </location>
</feature>
<feature type="sequence conflict" description="In Ref. 11; AAB30631." evidence="13" ref="11">
    <original>F</original>
    <variation>C</variation>
    <location>
        <position position="237"/>
    </location>
</feature>
<feature type="sequence conflict" description="In Ref. 5; BAD96582." evidence="13" ref="5">
    <original>H</original>
    <variation>L</variation>
    <location>
        <position position="269"/>
    </location>
</feature>
<feature type="sequence conflict" description="In Ref. 1; CAA73998." evidence="13" ref="1">
    <original>T</original>
    <variation>N</variation>
    <location>
        <position position="320"/>
    </location>
</feature>
<feature type="sequence conflict" description="In Ref. 1; CAA73998." evidence="13" ref="1">
    <original>C</original>
    <variation>W</variation>
    <location>
        <position position="326"/>
    </location>
</feature>
<feature type="sequence conflict" description="In Ref. 1; CAA73998." evidence="13" ref="1">
    <original>A</original>
    <variation>T</variation>
    <location>
        <position position="333"/>
    </location>
</feature>
<feature type="sequence conflict" description="In Ref. 8; AAH05807." evidence="13" ref="8">
    <location>
        <begin position="356"/>
        <end position="359"/>
    </location>
</feature>
<feature type="helix" evidence="18">
    <location>
        <begin position="57"/>
        <end position="59"/>
    </location>
</feature>
<feature type="strand" evidence="18">
    <location>
        <begin position="63"/>
        <end position="65"/>
    </location>
</feature>
<feature type="helix" evidence="18">
    <location>
        <begin position="73"/>
        <end position="91"/>
    </location>
</feature>
<feature type="turn" evidence="18">
    <location>
        <begin position="92"/>
        <end position="95"/>
    </location>
</feature>
<feature type="helix" evidence="18">
    <location>
        <begin position="98"/>
        <end position="115"/>
    </location>
</feature>
<feature type="helix" evidence="18">
    <location>
        <begin position="116"/>
        <end position="124"/>
    </location>
</feature>
<feature type="helix" evidence="18">
    <location>
        <begin position="132"/>
        <end position="144"/>
    </location>
</feature>
<feature type="helix" evidence="18">
    <location>
        <begin position="150"/>
        <end position="162"/>
    </location>
</feature>
<feature type="turn" evidence="18">
    <location>
        <begin position="163"/>
        <end position="165"/>
    </location>
</feature>
<feature type="helix" evidence="18">
    <location>
        <begin position="173"/>
        <end position="175"/>
    </location>
</feature>
<feature type="helix" evidence="18">
    <location>
        <begin position="177"/>
        <end position="181"/>
    </location>
</feature>
<feature type="helix" evidence="18">
    <location>
        <begin position="183"/>
        <end position="185"/>
    </location>
</feature>
<feature type="helix" evidence="18">
    <location>
        <begin position="192"/>
        <end position="196"/>
    </location>
</feature>
<feature type="helix" evidence="18">
    <location>
        <begin position="203"/>
        <end position="206"/>
    </location>
</feature>
<feature type="helix" evidence="18">
    <location>
        <begin position="209"/>
        <end position="216"/>
    </location>
</feature>
<feature type="helix" evidence="18">
    <location>
        <begin position="218"/>
        <end position="226"/>
    </location>
</feature>
<feature type="helix" evidence="18">
    <location>
        <begin position="228"/>
        <end position="237"/>
    </location>
</feature>
<feature type="helix" evidence="18">
    <location>
        <begin position="242"/>
        <end position="247"/>
    </location>
</feature>
<feature type="turn" evidence="18">
    <location>
        <begin position="248"/>
        <end position="250"/>
    </location>
</feature>
<feature type="helix" evidence="18">
    <location>
        <begin position="251"/>
        <end position="262"/>
    </location>
</feature>
<feature type="turn" evidence="18">
    <location>
        <begin position="263"/>
        <end position="266"/>
    </location>
</feature>
<feature type="helix" evidence="18">
    <location>
        <begin position="267"/>
        <end position="269"/>
    </location>
</feature>
<feature type="strand" evidence="18">
    <location>
        <begin position="271"/>
        <end position="273"/>
    </location>
</feature>
<feature type="strand" evidence="18">
    <location>
        <begin position="278"/>
        <end position="280"/>
    </location>
</feature>
<feature type="helix" evidence="18">
    <location>
        <begin position="286"/>
        <end position="291"/>
    </location>
</feature>
<feature type="strand" evidence="18">
    <location>
        <begin position="292"/>
        <end position="294"/>
    </location>
</feature>
<feature type="helix" evidence="18">
    <location>
        <begin position="298"/>
        <end position="303"/>
    </location>
</feature>
<feature type="strand" evidence="18">
    <location>
        <begin position="308"/>
        <end position="313"/>
    </location>
</feature>
<feature type="helix" evidence="18">
    <location>
        <begin position="319"/>
        <end position="329"/>
    </location>
</feature>
<feature type="helix" evidence="18">
    <location>
        <begin position="341"/>
        <end position="346"/>
    </location>
</feature>
<accession>O00767</accession>
<accession>B2R5U0</accession>
<accession>D3DR68</accession>
<accession>Q16150</accession>
<accession>Q53GR9</accession>
<accession>Q5W037</accession>
<accession>Q5W038</accession>
<accession>Q6GSS4</accession>
<accession>Q96KF6</accession>
<accession>Q9BS07</accession>
<accession>Q9Y695</accession>
<protein>
    <recommendedName>
        <fullName evidence="12">Stearoyl-CoA desaturase</fullName>
        <shortName evidence="11">hSCD1</shortName>
        <ecNumber evidence="4 5 6">1.14.19.1</ecNumber>
    </recommendedName>
    <alternativeName>
        <fullName>Acyl-CoA desaturase</fullName>
    </alternativeName>
    <alternativeName>
        <fullName>Delta(9)-desaturase</fullName>
        <shortName>Delta-9 desaturase</shortName>
    </alternativeName>
    <alternativeName>
        <fullName>Fatty acid desaturase</fullName>
    </alternativeName>
</protein>
<keyword id="KW-0002">3D-structure</keyword>
<keyword id="KW-0903">Direct protein sequencing</keyword>
<keyword id="KW-0256">Endoplasmic reticulum</keyword>
<keyword id="KW-0275">Fatty acid biosynthesis</keyword>
<keyword id="KW-0276">Fatty acid metabolism</keyword>
<keyword id="KW-0408">Iron</keyword>
<keyword id="KW-0444">Lipid biosynthesis</keyword>
<keyword id="KW-0443">Lipid metabolism</keyword>
<keyword id="KW-0472">Membrane</keyword>
<keyword id="KW-0479">Metal-binding</keyword>
<keyword id="KW-0560">Oxidoreductase</keyword>
<keyword id="KW-0597">Phosphoprotein</keyword>
<keyword id="KW-1267">Proteomics identification</keyword>
<keyword id="KW-1185">Reference proteome</keyword>
<keyword id="KW-0812">Transmembrane</keyword>
<keyword id="KW-1133">Transmembrane helix</keyword>
<evidence type="ECO:0000250" key="1">
    <source>
        <dbReference type="UniProtKB" id="P13516"/>
    </source>
</evidence>
<evidence type="ECO:0000269" key="2">
    <source>
    </source>
</evidence>
<evidence type="ECO:0000269" key="3">
    <source>
    </source>
</evidence>
<evidence type="ECO:0000269" key="4">
    <source>
    </source>
</evidence>
<evidence type="ECO:0000269" key="5">
    <source>
    </source>
</evidence>
<evidence type="ECO:0000269" key="6">
    <source>
    </source>
</evidence>
<evidence type="ECO:0000269" key="7">
    <source>
    </source>
</evidence>
<evidence type="ECO:0000269" key="8">
    <source ref="3"/>
</evidence>
<evidence type="ECO:0000269" key="9">
    <source ref="7"/>
</evidence>
<evidence type="ECO:0000303" key="10">
    <source>
    </source>
</evidence>
<evidence type="ECO:0000303" key="11">
    <source>
    </source>
</evidence>
<evidence type="ECO:0000303" key="12">
    <source>
    </source>
</evidence>
<evidence type="ECO:0000305" key="13"/>
<evidence type="ECO:0000305" key="14">
    <source>
    </source>
</evidence>
<evidence type="ECO:0000312" key="15">
    <source>
        <dbReference type="HGNC" id="HGNC:10571"/>
    </source>
</evidence>
<evidence type="ECO:0007744" key="16">
    <source>
    </source>
</evidence>
<evidence type="ECO:0007744" key="17">
    <source>
    </source>
</evidence>
<evidence type="ECO:0007829" key="18">
    <source>
        <dbReference type="PDB" id="4ZYO"/>
    </source>
</evidence>
<organism>
    <name type="scientific">Homo sapiens</name>
    <name type="common">Human</name>
    <dbReference type="NCBI Taxonomy" id="9606"/>
    <lineage>
        <taxon>Eukaryota</taxon>
        <taxon>Metazoa</taxon>
        <taxon>Chordata</taxon>
        <taxon>Craniata</taxon>
        <taxon>Vertebrata</taxon>
        <taxon>Euteleostomi</taxon>
        <taxon>Mammalia</taxon>
        <taxon>Eutheria</taxon>
        <taxon>Euarchontoglires</taxon>
        <taxon>Primates</taxon>
        <taxon>Haplorrhini</taxon>
        <taxon>Catarrhini</taxon>
        <taxon>Hominidae</taxon>
        <taxon>Homo</taxon>
    </lineage>
</organism>
<gene>
    <name type="primary">SCD</name>
    <name evidence="15" type="synonym">FADS5</name>
    <name evidence="10" type="synonym">SCD1</name>
    <name evidence="15" type="synonym">SCDOS</name>
</gene>
<dbReference type="EC" id="1.14.19.1" evidence="4 5 6"/>
<dbReference type="EMBL" id="Y13647">
    <property type="protein sequence ID" value="CAA73998.1"/>
    <property type="molecule type" value="mRNA"/>
</dbReference>
<dbReference type="EMBL" id="AF097514">
    <property type="protein sequence ID" value="AAD29870.1"/>
    <property type="molecule type" value="mRNA"/>
</dbReference>
<dbReference type="EMBL" id="AB032261">
    <property type="protein sequence ID" value="BAA93510.1"/>
    <property type="molecule type" value="mRNA"/>
</dbReference>
<dbReference type="EMBL" id="AK312312">
    <property type="protein sequence ID" value="BAG35237.1"/>
    <property type="molecule type" value="mRNA"/>
</dbReference>
<dbReference type="EMBL" id="AK222862">
    <property type="protein sequence ID" value="BAD96582.1"/>
    <property type="molecule type" value="mRNA"/>
</dbReference>
<dbReference type="EMBL" id="AL139819">
    <property type="status" value="NOT_ANNOTATED_CDS"/>
    <property type="molecule type" value="Genomic_DNA"/>
</dbReference>
<dbReference type="EMBL" id="CH471066">
    <property type="protein sequence ID" value="EAW49829.1"/>
    <property type="molecule type" value="Genomic_DNA"/>
</dbReference>
<dbReference type="EMBL" id="CH471066">
    <property type="protein sequence ID" value="EAW49830.1"/>
    <property type="molecule type" value="Genomic_DNA"/>
</dbReference>
<dbReference type="EMBL" id="BC005807">
    <property type="protein sequence ID" value="AAH05807.1"/>
    <property type="molecule type" value="mRNA"/>
</dbReference>
<dbReference type="EMBL" id="BC062303">
    <property type="protein sequence ID" value="AAH62303.1"/>
    <property type="molecule type" value="mRNA"/>
</dbReference>
<dbReference type="EMBL" id="AF320307">
    <property type="protein sequence ID" value="AAK54510.1"/>
    <property type="molecule type" value="Genomic_DNA"/>
</dbReference>
<dbReference type="EMBL" id="S70284">
    <property type="protein sequence ID" value="AAB30631.1"/>
    <property type="molecule type" value="mRNA"/>
</dbReference>
<dbReference type="CCDS" id="CCDS7493.1"/>
<dbReference type="PIR" id="I54779">
    <property type="entry name" value="I54779"/>
</dbReference>
<dbReference type="RefSeq" id="NP_005054.3">
    <property type="nucleotide sequence ID" value="NM_005063.4"/>
</dbReference>
<dbReference type="PDB" id="4ZYO">
    <property type="method" value="X-ray"/>
    <property type="resolution" value="3.25 A"/>
    <property type="chains" value="A=45-359"/>
</dbReference>
<dbReference type="PDBsum" id="4ZYO"/>
<dbReference type="SMR" id="O00767"/>
<dbReference type="BioGRID" id="112225">
    <property type="interactions" value="154"/>
</dbReference>
<dbReference type="FunCoup" id="O00767">
    <property type="interactions" value="784"/>
</dbReference>
<dbReference type="IntAct" id="O00767">
    <property type="interactions" value="81"/>
</dbReference>
<dbReference type="MINT" id="O00767"/>
<dbReference type="STRING" id="9606.ENSP00000359380"/>
<dbReference type="BindingDB" id="O00767"/>
<dbReference type="ChEMBL" id="CHEMBL5555"/>
<dbReference type="SwissLipids" id="SLP:000000465"/>
<dbReference type="GlyGen" id="O00767">
    <property type="glycosylation" value="1 site, 1 O-linked glycan (1 site)"/>
</dbReference>
<dbReference type="iPTMnet" id="O00767"/>
<dbReference type="MetOSite" id="O00767"/>
<dbReference type="PhosphoSitePlus" id="O00767"/>
<dbReference type="SwissPalm" id="O00767"/>
<dbReference type="BioMuta" id="SCD"/>
<dbReference type="jPOST" id="O00767"/>
<dbReference type="MassIVE" id="O00767"/>
<dbReference type="PaxDb" id="9606-ENSP00000359380"/>
<dbReference type="PeptideAtlas" id="O00767"/>
<dbReference type="ProteomicsDB" id="48027"/>
<dbReference type="Pumba" id="O00767"/>
<dbReference type="TopDownProteomics" id="O00767"/>
<dbReference type="Antibodypedia" id="1335">
    <property type="antibodies" value="303 antibodies from 38 providers"/>
</dbReference>
<dbReference type="DNASU" id="6319"/>
<dbReference type="YCharOS" id="O00767">
    <property type="antibodies" value="Tested 10 antibodies from 6 manufacturers"/>
</dbReference>
<dbReference type="Ensembl" id="ENST00000370355.3">
    <property type="protein sequence ID" value="ENSP00000359380.2"/>
    <property type="gene ID" value="ENSG00000099194.6"/>
</dbReference>
<dbReference type="GeneID" id="6319"/>
<dbReference type="KEGG" id="hsa:6319"/>
<dbReference type="MANE-Select" id="ENST00000370355.3">
    <property type="protein sequence ID" value="ENSP00000359380.2"/>
    <property type="RefSeq nucleotide sequence ID" value="NM_005063.5"/>
    <property type="RefSeq protein sequence ID" value="NP_005054.3"/>
</dbReference>
<dbReference type="UCSC" id="uc001kqy.4">
    <property type="organism name" value="human"/>
</dbReference>
<dbReference type="AGR" id="HGNC:10571"/>
<dbReference type="CTD" id="6319"/>
<dbReference type="DisGeNET" id="6319"/>
<dbReference type="GeneCards" id="SCD"/>
<dbReference type="HGNC" id="HGNC:10571">
    <property type="gene designation" value="SCD"/>
</dbReference>
<dbReference type="HPA" id="ENSG00000099194">
    <property type="expression patterns" value="Tissue enhanced (adipose tissue, brain, liver)"/>
</dbReference>
<dbReference type="MIM" id="604031">
    <property type="type" value="gene"/>
</dbReference>
<dbReference type="neXtProt" id="NX_O00767"/>
<dbReference type="OpenTargets" id="ENSG00000099194"/>
<dbReference type="PharmGKB" id="PA34984"/>
<dbReference type="VEuPathDB" id="HostDB:ENSG00000099194"/>
<dbReference type="eggNOG" id="KOG1600">
    <property type="taxonomic scope" value="Eukaryota"/>
</dbReference>
<dbReference type="GeneTree" id="ENSGT00940000154908"/>
<dbReference type="HOGENOM" id="CLU_027359_0_0_1"/>
<dbReference type="InParanoid" id="O00767"/>
<dbReference type="OMA" id="SCGESWH"/>
<dbReference type="OrthoDB" id="10260134at2759"/>
<dbReference type="PAN-GO" id="O00767">
    <property type="GO annotations" value="8 GO annotations based on evolutionary models"/>
</dbReference>
<dbReference type="PhylomeDB" id="O00767"/>
<dbReference type="TreeFam" id="TF313251"/>
<dbReference type="BRENDA" id="1.14.19.1">
    <property type="organism ID" value="2681"/>
</dbReference>
<dbReference type="PathwayCommons" id="O00767"/>
<dbReference type="Reactome" id="R-HSA-2426168">
    <property type="pathway name" value="Activation of gene expression by SREBF (SREBP)"/>
</dbReference>
<dbReference type="Reactome" id="R-HSA-75105">
    <property type="pathway name" value="Fatty acyl-CoA biosynthesis"/>
</dbReference>
<dbReference type="Reactome" id="R-HSA-9029558">
    <property type="pathway name" value="NR1H2 &amp; NR1H3 regulate gene expression linked to lipogenesis"/>
</dbReference>
<dbReference type="Reactome" id="R-HSA-9841922">
    <property type="pathway name" value="MLL4 and MLL3 complexes regulate expression of PPARG target genes in adipogenesis and hepatic steatosis"/>
</dbReference>
<dbReference type="SignaLink" id="O00767"/>
<dbReference type="SIGNOR" id="O00767"/>
<dbReference type="BioGRID-ORCS" id="6319">
    <property type="hits" value="536 hits in 1169 CRISPR screens"/>
</dbReference>
<dbReference type="ChiTaRS" id="SCD">
    <property type="organism name" value="human"/>
</dbReference>
<dbReference type="EvolutionaryTrace" id="O00767"/>
<dbReference type="GeneWiki" id="Stearoyl-CoA_desaturase-1"/>
<dbReference type="GenomeRNAi" id="6319"/>
<dbReference type="Pharos" id="O00767">
    <property type="development level" value="Tchem"/>
</dbReference>
<dbReference type="PRO" id="PR:O00767"/>
<dbReference type="Proteomes" id="UP000005640">
    <property type="component" value="Chromosome 10"/>
</dbReference>
<dbReference type="RNAct" id="O00767">
    <property type="molecule type" value="protein"/>
</dbReference>
<dbReference type="Bgee" id="ENSG00000099194">
    <property type="expression patterns" value="Expressed in inferior vagus X ganglion and 205 other cell types or tissues"/>
</dbReference>
<dbReference type="GO" id="GO:0005783">
    <property type="term" value="C:endoplasmic reticulum"/>
    <property type="evidence" value="ECO:0000314"/>
    <property type="project" value="HPA"/>
</dbReference>
<dbReference type="GO" id="GO:0005789">
    <property type="term" value="C:endoplasmic reticulum membrane"/>
    <property type="evidence" value="ECO:0000314"/>
    <property type="project" value="UniProtKB"/>
</dbReference>
<dbReference type="GO" id="GO:0016020">
    <property type="term" value="C:membrane"/>
    <property type="evidence" value="ECO:0000314"/>
    <property type="project" value="UniProtKB"/>
</dbReference>
<dbReference type="GO" id="GO:0005730">
    <property type="term" value="C:nucleolus"/>
    <property type="evidence" value="ECO:0000314"/>
    <property type="project" value="HPA"/>
</dbReference>
<dbReference type="GO" id="GO:0005506">
    <property type="term" value="F:iron ion binding"/>
    <property type="evidence" value="ECO:0000314"/>
    <property type="project" value="UniProtKB"/>
</dbReference>
<dbReference type="GO" id="GO:0016491">
    <property type="term" value="F:oxidoreductase activity"/>
    <property type="evidence" value="ECO:0000314"/>
    <property type="project" value="UniProtKB"/>
</dbReference>
<dbReference type="GO" id="GO:0032896">
    <property type="term" value="F:palmitoyl-CoA 9-desaturase activity"/>
    <property type="evidence" value="ECO:0000318"/>
    <property type="project" value="GO_Central"/>
</dbReference>
<dbReference type="GO" id="GO:0004768">
    <property type="term" value="F:stearoyl-CoA 9-desaturase activity"/>
    <property type="evidence" value="ECO:0000314"/>
    <property type="project" value="UniProtKB"/>
</dbReference>
<dbReference type="GO" id="GO:1903966">
    <property type="term" value="P:monounsaturated fatty acid biosynthetic process"/>
    <property type="evidence" value="ECO:0000318"/>
    <property type="project" value="GO_Central"/>
</dbReference>
<dbReference type="GO" id="GO:0120162">
    <property type="term" value="P:positive regulation of cold-induced thermogenesis"/>
    <property type="evidence" value="ECO:0000250"/>
    <property type="project" value="YuBioLab"/>
</dbReference>
<dbReference type="GO" id="GO:0070542">
    <property type="term" value="P:response to fatty acid"/>
    <property type="evidence" value="ECO:0000318"/>
    <property type="project" value="GO_Central"/>
</dbReference>
<dbReference type="GO" id="GO:0006636">
    <property type="term" value="P:unsaturated fatty acid biosynthetic process"/>
    <property type="evidence" value="ECO:0000314"/>
    <property type="project" value="UniProtKB"/>
</dbReference>
<dbReference type="CDD" id="cd03505">
    <property type="entry name" value="Delta9-FADS-like"/>
    <property type="match status" value="1"/>
</dbReference>
<dbReference type="InterPro" id="IPR015876">
    <property type="entry name" value="Acyl-CoA_DS"/>
</dbReference>
<dbReference type="InterPro" id="IPR001522">
    <property type="entry name" value="FADS-1_CS"/>
</dbReference>
<dbReference type="PANTHER" id="PTHR11351">
    <property type="entry name" value="ACYL-COA DESATURASE"/>
    <property type="match status" value="1"/>
</dbReference>
<dbReference type="PANTHER" id="PTHR11351:SF102">
    <property type="entry name" value="STEAROYL-COA DESATURASE"/>
    <property type="match status" value="1"/>
</dbReference>
<dbReference type="PRINTS" id="PR00075">
    <property type="entry name" value="FACDDSATRASE"/>
</dbReference>
<dbReference type="PROSITE" id="PS00476">
    <property type="entry name" value="FATTY_ACID_DESATUR_1"/>
    <property type="match status" value="1"/>
</dbReference>
<name>SCD_HUMAN</name>
<proteinExistence type="evidence at protein level"/>